<keyword id="KW-0503">Monooxygenase</keyword>
<keyword id="KW-0560">Oxidoreductase</keyword>
<comment type="function">
    <text evidence="1">Oxidoreductase; part of the gene cluster that mediates the biosynthesis of agnestins, dihydroxy-xanthone metabolites (PubMed:30746079). The pathway begins with the assembly and cyclization of atrochrysone thioester by the non-reducing polyketide synthase Agnpks1 (PubMed:30746079). The atrochrysone carboxyl ACP thioesterase AgnL7 then breaks the thioester bond and releases the atrochrysone carboxylic acid as the first enzyme-free intermediate (PubMed:30746079). The decarboxylase AgnL1 then catalyzes the concerted decarboxylation-elimination required to convert atochrysone carboxylic acid into emodin anthrone, which is further oxidized to emodin by the anthrone oxygenase AgnL2 (PubMed:30746079). Emodin then undergoes reduction catalyzed by the oxidoreductase AgnL4 to yield the dihydroquinone tautomer which is the substrate for reduction by the short chain dehydrogenase AgnL6 reduction to produce hydroxyketone, followed by AgnL8 dehydration and likely spontaneous autoxidation to chrysophanol (PubMed:30746079). Baeyer-Villiger oxidation by the oxidase AgnL3 leads to monodictyphenone via cleavage of the C-10/C-10a bond of chrysophanol (PubMed:30746079). Alternative cleavage at the C-4a/C-10 bond of chrysophanol also leads to the formation some cephalone F (PubMed:30746079). Further conversion to agnestins A and B, requires reduction to dihydro-monodictyphenone, oxidation to agnestin C probably via an epoxide, and rearrangement to either agnestin A or agnestin B directly, although agnestin A or agnestin B can also interconvert (PubMed:30746079). Within the cluster, AgnR1 is the only unassigned oxidoreductase present which could be involved in this conversion. However, AgnR1 seems not to be involved in this step, and thus genes involved in the proposed oxidation/reduction may be located elsewhere on the genome (PubMed:30746079). Further agnestin A derivatives are probably formed by spontaneous decarboxylations, dehydrations and methanolysis reactions (PubMed:30746079).</text>
</comment>
<comment type="pathway">
    <text evidence="1">Secondary metabolite biosynthesis.</text>
</comment>
<comment type="disruption phenotype">
    <text evidence="1">Leads to total loss of monodictyphenone and agnestin biosynthesis and accumulates emodin but only traces of chrysophanol.</text>
</comment>
<comment type="similarity">
    <text evidence="3">Belongs to the avfA family.</text>
</comment>
<proteinExistence type="inferred from homology"/>
<feature type="chain" id="PRO_0000449013" description="Oxidoreductase AgnL4">
    <location>
        <begin position="1"/>
        <end position="262"/>
    </location>
</feature>
<accession>A0A411PQN7</accession>
<name>AGN4_PAEDI</name>
<dbReference type="EC" id="1.-.-.-" evidence="4"/>
<dbReference type="EMBL" id="MH898872">
    <property type="protein sequence ID" value="QBG38884.1"/>
    <property type="molecule type" value="Genomic_DNA"/>
</dbReference>
<dbReference type="SMR" id="A0A411PQN7"/>
<dbReference type="GO" id="GO:0004497">
    <property type="term" value="F:monooxygenase activity"/>
    <property type="evidence" value="ECO:0007669"/>
    <property type="project" value="UniProtKB-KW"/>
</dbReference>
<dbReference type="Gene3D" id="3.40.50.720">
    <property type="entry name" value="NAD(P)-binding Rossmann-like Domain"/>
    <property type="match status" value="1"/>
</dbReference>
<dbReference type="InterPro" id="IPR016040">
    <property type="entry name" value="NAD(P)-bd_dom"/>
</dbReference>
<dbReference type="InterPro" id="IPR036291">
    <property type="entry name" value="NAD(P)-bd_dom_sf"/>
</dbReference>
<dbReference type="PANTHER" id="PTHR15020">
    <property type="entry name" value="FLAVIN REDUCTASE-RELATED"/>
    <property type="match status" value="1"/>
</dbReference>
<dbReference type="PANTHER" id="PTHR15020:SF37">
    <property type="entry name" value="OXIDOREDUCTASE MDPK"/>
    <property type="match status" value="1"/>
</dbReference>
<dbReference type="Pfam" id="PF13460">
    <property type="entry name" value="NAD_binding_10"/>
    <property type="match status" value="1"/>
</dbReference>
<dbReference type="SUPFAM" id="SSF51735">
    <property type="entry name" value="NAD(P)-binding Rossmann-fold domains"/>
    <property type="match status" value="1"/>
</dbReference>
<gene>
    <name evidence="2" type="primary">AgnL4</name>
</gene>
<sequence>MATYAVLGATGNCGTALIDNLLRTEGAQIHAFCRNKPKLMQKMPALVDHKRVQIYEGSIDDIDLLAECIRGTRAIFHVVTTNDNVPGCQVGLDTAQSIIAALESLQALEPEGTKPPKIVLLSSGTIDDHLSRHMPSFFRRILRAAASHVYEDLRRTEAFLRAQPDGVSTIFIKPGGLSIDVQRGHALNLDRDESFVSYLDLAAAMIEAADDPDDRFDGKNVSVANTNGAARFPMGTPLCILTGLARHSFPWLHRYLPATGPG</sequence>
<evidence type="ECO:0000269" key="1">
    <source>
    </source>
</evidence>
<evidence type="ECO:0000303" key="2">
    <source>
    </source>
</evidence>
<evidence type="ECO:0000305" key="3"/>
<evidence type="ECO:0000305" key="4">
    <source>
    </source>
</evidence>
<protein>
    <recommendedName>
        <fullName evidence="2">Oxidoreductase AgnL4</fullName>
        <ecNumber evidence="4">1.-.-.-</ecNumber>
    </recommendedName>
    <alternativeName>
        <fullName evidence="2">Agnestins biosynthesis cluster protein L4</fullName>
    </alternativeName>
</protein>
<reference key="1">
    <citation type="journal article" date="2019" name="Chem. Sci.">
        <title>Characterisation of the biosynthetic pathway to agnestins A and B reveals the reductive route to chrysophanol in fungi.</title>
        <authorList>
            <person name="Szwalbe A.J."/>
            <person name="Williams K."/>
            <person name="Song Z."/>
            <person name="de Mattos-Shipley K."/>
            <person name="Vincent J.L."/>
            <person name="Bailey A.M."/>
            <person name="Willis C.L."/>
            <person name="Cox R.J."/>
            <person name="Simpson T.J."/>
        </authorList>
    </citation>
    <scope>NUCLEOTIDE SEQUENCE [GENOMIC DNA]</scope>
    <scope>FUNCTION</scope>
    <scope>DISRUPTION PHENOTYPE</scope>
    <scope>PATHWAY</scope>
    <source>
        <strain>K5013</strain>
    </source>
</reference>
<organism>
    <name type="scientific">Paecilomyces divaricatus</name>
    <name type="common">Penicillium divaricatum</name>
    <dbReference type="NCBI Taxonomy" id="644132"/>
    <lineage>
        <taxon>Eukaryota</taxon>
        <taxon>Fungi</taxon>
        <taxon>Dikarya</taxon>
        <taxon>Ascomycota</taxon>
        <taxon>Pezizomycotina</taxon>
        <taxon>Eurotiomycetes</taxon>
        <taxon>Eurotiomycetidae</taxon>
        <taxon>Eurotiales</taxon>
        <taxon>Thermoascaceae</taxon>
        <taxon>Paecilomyces</taxon>
    </lineage>
</organism>